<feature type="chain" id="PRO_0000183588" description="Cytochrome c oxidase subunit 2">
    <location>
        <begin position="1"/>
        <end position="228"/>
    </location>
</feature>
<feature type="topological domain" description="Mitochondrial intermembrane" evidence="2">
    <location>
        <begin position="1"/>
        <end position="26"/>
    </location>
</feature>
<feature type="transmembrane region" description="Helical" evidence="2">
    <location>
        <begin position="27"/>
        <end position="48"/>
    </location>
</feature>
<feature type="topological domain" description="Mitochondrial matrix" evidence="2">
    <location>
        <begin position="49"/>
        <end position="62"/>
    </location>
</feature>
<feature type="transmembrane region" description="Helical" evidence="2">
    <location>
        <begin position="63"/>
        <end position="82"/>
    </location>
</feature>
<feature type="topological domain" description="Mitochondrial intermembrane" evidence="2">
    <location>
        <begin position="83"/>
        <end position="228"/>
    </location>
</feature>
<feature type="binding site" evidence="1">
    <location>
        <position position="161"/>
    </location>
    <ligand>
        <name>Cu cation</name>
        <dbReference type="ChEBI" id="CHEBI:23378"/>
        <label>A1</label>
    </ligand>
</feature>
<feature type="binding site" evidence="1">
    <location>
        <position position="196"/>
    </location>
    <ligand>
        <name>Cu cation</name>
        <dbReference type="ChEBI" id="CHEBI:23378"/>
        <label>A1</label>
    </ligand>
</feature>
<feature type="binding site" evidence="1">
    <location>
        <position position="196"/>
    </location>
    <ligand>
        <name>Cu cation</name>
        <dbReference type="ChEBI" id="CHEBI:23378"/>
        <label>A2</label>
    </ligand>
</feature>
<feature type="binding site" evidence="1">
    <location>
        <position position="198"/>
    </location>
    <ligand>
        <name>Cu cation</name>
        <dbReference type="ChEBI" id="CHEBI:23378"/>
        <label>A2</label>
    </ligand>
</feature>
<feature type="binding site" evidence="1">
    <location>
        <position position="198"/>
    </location>
    <ligand>
        <name>Mg(2+)</name>
        <dbReference type="ChEBI" id="CHEBI:18420"/>
        <note>ligand shared with subunit 1</note>
    </ligand>
</feature>
<feature type="binding site" evidence="1">
    <location>
        <position position="200"/>
    </location>
    <ligand>
        <name>Cu cation</name>
        <dbReference type="ChEBI" id="CHEBI:23378"/>
        <label>A1</label>
    </ligand>
</feature>
<feature type="binding site" evidence="1">
    <location>
        <position position="200"/>
    </location>
    <ligand>
        <name>Cu cation</name>
        <dbReference type="ChEBI" id="CHEBI:23378"/>
        <label>A2</label>
    </ligand>
</feature>
<feature type="binding site" evidence="1">
    <location>
        <position position="204"/>
    </location>
    <ligand>
        <name>Cu cation</name>
        <dbReference type="ChEBI" id="CHEBI:23378"/>
        <label>A2</label>
    </ligand>
</feature>
<feature type="binding site" evidence="1">
    <location>
        <position position="207"/>
    </location>
    <ligand>
        <name>Cu cation</name>
        <dbReference type="ChEBI" id="CHEBI:23378"/>
        <label>A1</label>
    </ligand>
</feature>
<reference key="1">
    <citation type="journal article" date="1983" name="Nucleic Acids Res.">
        <title>Nucleotide sequence of a segment of Drosophila mitochondrial DNA that contains the genes for cytochrome c oxidase subunits II and III and ATPase subunit 6.</title>
        <authorList>
            <person name="Clary D.O."/>
            <person name="Wolstenholme D.R."/>
        </authorList>
    </citation>
    <scope>NUCLEOTIDE SEQUENCE [GENOMIC DNA]</scope>
</reference>
<reference key="2">
    <citation type="journal article" date="1985" name="J. Mol. Evol.">
        <title>The mitochondrial DNA molecular of Drosophila yakuba: nucleotide sequence, gene organization, and genetic code.</title>
        <authorList>
            <person name="Clary D.O."/>
            <person name="Wolstenholme D.R."/>
        </authorList>
    </citation>
    <scope>NUCLEOTIDE SEQUENCE [LARGE SCALE GENOMIC DNA]</scope>
    <source>
        <strain>2317.6 Ivory Coast</strain>
    </source>
</reference>
<keyword id="KW-0186">Copper</keyword>
<keyword id="KW-0249">Electron transport</keyword>
<keyword id="KW-0460">Magnesium</keyword>
<keyword id="KW-0472">Membrane</keyword>
<keyword id="KW-0479">Metal-binding</keyword>
<keyword id="KW-0496">Mitochondrion</keyword>
<keyword id="KW-0999">Mitochondrion inner membrane</keyword>
<keyword id="KW-0679">Respiratory chain</keyword>
<keyword id="KW-1278">Translocase</keyword>
<keyword id="KW-0812">Transmembrane</keyword>
<keyword id="KW-1133">Transmembrane helix</keyword>
<keyword id="KW-0813">Transport</keyword>
<organism>
    <name type="scientific">Drosophila yakuba</name>
    <name type="common">Fruit fly</name>
    <dbReference type="NCBI Taxonomy" id="7245"/>
    <lineage>
        <taxon>Eukaryota</taxon>
        <taxon>Metazoa</taxon>
        <taxon>Ecdysozoa</taxon>
        <taxon>Arthropoda</taxon>
        <taxon>Hexapoda</taxon>
        <taxon>Insecta</taxon>
        <taxon>Pterygota</taxon>
        <taxon>Neoptera</taxon>
        <taxon>Endopterygota</taxon>
        <taxon>Diptera</taxon>
        <taxon>Brachycera</taxon>
        <taxon>Muscomorpha</taxon>
        <taxon>Ephydroidea</taxon>
        <taxon>Drosophilidae</taxon>
        <taxon>Drosophila</taxon>
        <taxon>Sophophora</taxon>
    </lineage>
</organism>
<evidence type="ECO:0000250" key="1">
    <source>
        <dbReference type="UniProtKB" id="P00410"/>
    </source>
</evidence>
<evidence type="ECO:0000255" key="2"/>
<evidence type="ECO:0000305" key="3"/>
<gene>
    <name type="primary">mt:CoII</name>
    <name type="synonym">CoII</name>
</gene>
<dbReference type="EC" id="7.1.1.9"/>
<dbReference type="EMBL" id="X00924">
    <property type="protein sequence ID" value="CAA25440.1"/>
    <property type="molecule type" value="Genomic_DNA"/>
</dbReference>
<dbReference type="EMBL" id="X03240">
    <property type="protein sequence ID" value="CAA26987.1"/>
    <property type="molecule type" value="Genomic_DNA"/>
</dbReference>
<dbReference type="PIR" id="A93477">
    <property type="entry name" value="OBFF2Y"/>
</dbReference>
<dbReference type="SMR" id="P00409"/>
<dbReference type="EnsemblMetazoa" id="GeneID_807630_df_mr">
    <property type="protein sequence ID" value="NP_006904.1"/>
    <property type="gene ID" value="GeneID_807630"/>
</dbReference>
<dbReference type="KEGG" id="dya:COX2"/>
<dbReference type="CTD" id="4513"/>
<dbReference type="OrthoDB" id="539285at2759"/>
<dbReference type="Proteomes" id="UP000002282">
    <property type="component" value="Mitochondrion"/>
</dbReference>
<dbReference type="GO" id="GO:0005743">
    <property type="term" value="C:mitochondrial inner membrane"/>
    <property type="evidence" value="ECO:0007669"/>
    <property type="project" value="UniProtKB-SubCell"/>
</dbReference>
<dbReference type="GO" id="GO:0045277">
    <property type="term" value="C:respiratory chain complex IV"/>
    <property type="evidence" value="ECO:0007669"/>
    <property type="project" value="EnsemblMetazoa"/>
</dbReference>
<dbReference type="GO" id="GO:0005507">
    <property type="term" value="F:copper ion binding"/>
    <property type="evidence" value="ECO:0007669"/>
    <property type="project" value="InterPro"/>
</dbReference>
<dbReference type="GO" id="GO:0004129">
    <property type="term" value="F:cytochrome-c oxidase activity"/>
    <property type="evidence" value="ECO:0007669"/>
    <property type="project" value="UniProtKB-EC"/>
</dbReference>
<dbReference type="GO" id="GO:0042773">
    <property type="term" value="P:ATP synthesis coupled electron transport"/>
    <property type="evidence" value="ECO:0007669"/>
    <property type="project" value="TreeGrafter"/>
</dbReference>
<dbReference type="CDD" id="cd13912">
    <property type="entry name" value="CcO_II_C"/>
    <property type="match status" value="1"/>
</dbReference>
<dbReference type="FunFam" id="1.10.287.90:FF:000006">
    <property type="entry name" value="Cytochrome c oxidase subunit 2"/>
    <property type="match status" value="1"/>
</dbReference>
<dbReference type="FunFam" id="2.60.40.420:FF:000001">
    <property type="entry name" value="Cytochrome c oxidase subunit 2"/>
    <property type="match status" value="1"/>
</dbReference>
<dbReference type="Gene3D" id="1.10.287.90">
    <property type="match status" value="1"/>
</dbReference>
<dbReference type="Gene3D" id="2.60.40.420">
    <property type="entry name" value="Cupredoxins - blue copper proteins"/>
    <property type="match status" value="1"/>
</dbReference>
<dbReference type="InterPro" id="IPR045187">
    <property type="entry name" value="CcO_II"/>
</dbReference>
<dbReference type="InterPro" id="IPR002429">
    <property type="entry name" value="CcO_II-like_C"/>
</dbReference>
<dbReference type="InterPro" id="IPR034210">
    <property type="entry name" value="CcO_II_C"/>
</dbReference>
<dbReference type="InterPro" id="IPR001505">
    <property type="entry name" value="Copper_CuA"/>
</dbReference>
<dbReference type="InterPro" id="IPR008972">
    <property type="entry name" value="Cupredoxin"/>
</dbReference>
<dbReference type="InterPro" id="IPR014222">
    <property type="entry name" value="Cyt_c_oxidase_su2"/>
</dbReference>
<dbReference type="InterPro" id="IPR011759">
    <property type="entry name" value="Cyt_c_oxidase_su2_TM_dom"/>
</dbReference>
<dbReference type="InterPro" id="IPR036257">
    <property type="entry name" value="Cyt_c_oxidase_su2_TM_sf"/>
</dbReference>
<dbReference type="NCBIfam" id="TIGR02866">
    <property type="entry name" value="CoxB"/>
    <property type="match status" value="1"/>
</dbReference>
<dbReference type="PANTHER" id="PTHR22888:SF9">
    <property type="entry name" value="CYTOCHROME C OXIDASE SUBUNIT 2"/>
    <property type="match status" value="1"/>
</dbReference>
<dbReference type="PANTHER" id="PTHR22888">
    <property type="entry name" value="CYTOCHROME C OXIDASE, SUBUNIT II"/>
    <property type="match status" value="1"/>
</dbReference>
<dbReference type="Pfam" id="PF00116">
    <property type="entry name" value="COX2"/>
    <property type="match status" value="1"/>
</dbReference>
<dbReference type="Pfam" id="PF02790">
    <property type="entry name" value="COX2_TM"/>
    <property type="match status" value="1"/>
</dbReference>
<dbReference type="PRINTS" id="PR01166">
    <property type="entry name" value="CYCOXIDASEII"/>
</dbReference>
<dbReference type="SUPFAM" id="SSF49503">
    <property type="entry name" value="Cupredoxins"/>
    <property type="match status" value="1"/>
</dbReference>
<dbReference type="SUPFAM" id="SSF81464">
    <property type="entry name" value="Cytochrome c oxidase subunit II-like, transmembrane region"/>
    <property type="match status" value="1"/>
</dbReference>
<dbReference type="PROSITE" id="PS00078">
    <property type="entry name" value="COX2"/>
    <property type="match status" value="1"/>
</dbReference>
<dbReference type="PROSITE" id="PS50857">
    <property type="entry name" value="COX2_CUA"/>
    <property type="match status" value="1"/>
</dbReference>
<dbReference type="PROSITE" id="PS50999">
    <property type="entry name" value="COX2_TM"/>
    <property type="match status" value="1"/>
</dbReference>
<protein>
    <recommendedName>
        <fullName>Cytochrome c oxidase subunit 2</fullName>
        <ecNumber>7.1.1.9</ecNumber>
    </recommendedName>
    <alternativeName>
        <fullName>Cytochrome c oxidase polypeptide II</fullName>
    </alternativeName>
</protein>
<accession>P00409</accession>
<sequence length="228" mass="26107">MSTWANLGLQDSASPLMEQLIFFHDHALLILVMITVLVGYLMFMLFFNNYVNRFLLHGQLIEMIWTILPAIILLFIALPSLRLLYLLDEINEPSVTLKSIGHQWYWSYEYSDFNNIEFDSYMIPTNELAIDGFRLLDVDNRVILPMNSQIRILVTAADVIHSWTVPALGVKVDGTPGRLNQTNFFINRPGLFYGQCSEICGANHSFMPIVIESVPVNNFIKWISSNNS</sequence>
<name>COX2_DROYA</name>
<geneLocation type="mitochondrion"/>
<proteinExistence type="inferred from homology"/>
<comment type="function">
    <text evidence="1">Component of the cytochrome c oxidase, the last enzyme in the mitochondrial electron transport chain which drives oxidative phosphorylation. The respiratory chain contains 3 multisubunit complexes succinate dehydrogenase (complex II, CII), ubiquinol-cytochrome c oxidoreductase (cytochrome b-c1 complex, complex III, CIII) and cytochrome c oxidase (complex IV, CIV), that cooperate to transfer electrons derived from NADH and succinate to molecular oxygen, creating an electrochemical gradient over the inner membrane that drives transmembrane transport and the ATP synthase. Cytochrome c oxidase is the component of the respiratory chain that catalyzes the reduction of oxygen to water. Electrons originating from reduced cytochrome c in the intermembrane space (IMS) are transferred via the dinuclear copper A center (CU(A)) of subunit 2 and heme A of subunit 1 to the active site in subunit 1, a binuclear center (BNC) formed by heme A3 and copper B (CU(B)). The BNC reduces molecular oxygen to 2 water molecules using 4 electrons from cytochrome c in the IMS and 4 protons from the mitochondrial matrix.</text>
</comment>
<comment type="catalytic activity">
    <reaction evidence="1">
        <text>4 Fe(II)-[cytochrome c] + O2 + 8 H(+)(in) = 4 Fe(III)-[cytochrome c] + 2 H2O + 4 H(+)(out)</text>
        <dbReference type="Rhea" id="RHEA:11436"/>
        <dbReference type="Rhea" id="RHEA-COMP:10350"/>
        <dbReference type="Rhea" id="RHEA-COMP:14399"/>
        <dbReference type="ChEBI" id="CHEBI:15377"/>
        <dbReference type="ChEBI" id="CHEBI:15378"/>
        <dbReference type="ChEBI" id="CHEBI:15379"/>
        <dbReference type="ChEBI" id="CHEBI:29033"/>
        <dbReference type="ChEBI" id="CHEBI:29034"/>
        <dbReference type="EC" id="7.1.1.9"/>
    </reaction>
    <physiologicalReaction direction="left-to-right" evidence="1">
        <dbReference type="Rhea" id="RHEA:11437"/>
    </physiologicalReaction>
</comment>
<comment type="cofactor">
    <cofactor evidence="1">
        <name>Cu cation</name>
        <dbReference type="ChEBI" id="CHEBI:23378"/>
    </cofactor>
    <text evidence="1">Binds a dinuclear copper A center per subunit.</text>
</comment>
<comment type="subunit">
    <text evidence="1">Component of the cytochrome c oxidase (complex IV, CIV), a multisubunit enzyme composed of a catalytic core of 3 subunits and several supernumerary subunits. The complex exists as a monomer or a dimer and forms supercomplexes (SCs) in the inner mitochondrial membrane with ubiquinol-cytochrome c oxidoreductase (cytochrome b-c1 complex, complex III, CIII).</text>
</comment>
<comment type="subcellular location">
    <subcellularLocation>
        <location evidence="1">Mitochondrion inner membrane</location>
        <topology evidence="1">Multi-pass membrane protein</topology>
    </subcellularLocation>
</comment>
<comment type="similarity">
    <text evidence="3">Belongs to the cytochrome c oxidase subunit 2 family.</text>
</comment>